<evidence type="ECO:0000255" key="1"/>
<evidence type="ECO:0000255" key="2">
    <source>
        <dbReference type="PROSITE-ProRule" id="PRU00521"/>
    </source>
</evidence>
<evidence type="ECO:0000269" key="3">
    <source>
    </source>
</evidence>
<evidence type="ECO:0000305" key="4">
    <source>
    </source>
</evidence>
<name>XCR1_MOUSE</name>
<proteinExistence type="evidence at transcript level"/>
<dbReference type="EMBL" id="AB028459">
    <property type="protein sequence ID" value="BAA85419.1"/>
    <property type="molecule type" value="Genomic_DNA"/>
</dbReference>
<dbReference type="SMR" id="Q9R0M1"/>
<dbReference type="FunCoup" id="Q9R0M1">
    <property type="interactions" value="161"/>
</dbReference>
<dbReference type="STRING" id="10090.ENSMUSP00000138255"/>
<dbReference type="PhosphoSitePlus" id="Q9R0M1"/>
<dbReference type="PaxDb" id="10090-ENSMUSP00000138255"/>
<dbReference type="Antibodypedia" id="2956">
    <property type="antibodies" value="295 antibodies from 30 providers"/>
</dbReference>
<dbReference type="Ensembl" id="ENSMUST00000182350.3">
    <property type="protein sequence ID" value="ENSMUSP00000138255.3"/>
    <property type="gene ID" value="ENSMUSG00000060509.6"/>
</dbReference>
<dbReference type="AGR" id="MGI:1346338"/>
<dbReference type="MGI" id="MGI:1346338">
    <property type="gene designation" value="Xcr1"/>
</dbReference>
<dbReference type="VEuPathDB" id="HostDB:ENSMUSG00000060509"/>
<dbReference type="eggNOG" id="KOG3656">
    <property type="taxonomic scope" value="Eukaryota"/>
</dbReference>
<dbReference type="GeneTree" id="ENSGT01110000267168"/>
<dbReference type="InParanoid" id="Q9R0M1"/>
<dbReference type="OMA" id="RSHTKNR"/>
<dbReference type="OrthoDB" id="10015690at2759"/>
<dbReference type="PhylomeDB" id="Q9R0M1"/>
<dbReference type="TreeFam" id="TF330966"/>
<dbReference type="Reactome" id="R-MMU-380108">
    <property type="pathway name" value="Chemokine receptors bind chemokines"/>
</dbReference>
<dbReference type="Reactome" id="R-MMU-416476">
    <property type="pathway name" value="G alpha (q) signalling events"/>
</dbReference>
<dbReference type="PRO" id="PR:Q9R0M1"/>
<dbReference type="Proteomes" id="UP000000589">
    <property type="component" value="Chromosome 9"/>
</dbReference>
<dbReference type="RNAct" id="Q9R0M1">
    <property type="molecule type" value="protein"/>
</dbReference>
<dbReference type="Bgee" id="ENSMUSG00000060509">
    <property type="expression patterns" value="Expressed in blastoderm cell in morula and 29 other cell types or tissues"/>
</dbReference>
<dbReference type="ExpressionAtlas" id="Q9R0M1">
    <property type="expression patterns" value="baseline and differential"/>
</dbReference>
<dbReference type="GO" id="GO:0005886">
    <property type="term" value="C:plasma membrane"/>
    <property type="evidence" value="ECO:0007669"/>
    <property type="project" value="UniProtKB-SubCell"/>
</dbReference>
<dbReference type="GO" id="GO:0004950">
    <property type="term" value="F:chemokine receptor activity"/>
    <property type="evidence" value="ECO:0007669"/>
    <property type="project" value="InterPro"/>
</dbReference>
<dbReference type="GO" id="GO:0006935">
    <property type="term" value="P:chemotaxis"/>
    <property type="evidence" value="ECO:0000314"/>
    <property type="project" value="MGI"/>
</dbReference>
<dbReference type="GO" id="GO:0051209">
    <property type="term" value="P:release of sequestered calcium ion into cytosol"/>
    <property type="evidence" value="ECO:0000314"/>
    <property type="project" value="MGI"/>
</dbReference>
<dbReference type="GO" id="GO:0034097">
    <property type="term" value="P:response to cytokine"/>
    <property type="evidence" value="ECO:0000314"/>
    <property type="project" value="MGI"/>
</dbReference>
<dbReference type="FunFam" id="1.20.1070.10:FF:000130">
    <property type="entry name" value="Chemokine (C-C motif) receptor 2"/>
    <property type="match status" value="1"/>
</dbReference>
<dbReference type="Gene3D" id="1.20.1070.10">
    <property type="entry name" value="Rhodopsin 7-helix transmembrane proteins"/>
    <property type="match status" value="1"/>
</dbReference>
<dbReference type="InterPro" id="IPR050119">
    <property type="entry name" value="CCR1-9-like"/>
</dbReference>
<dbReference type="InterPro" id="IPR005393">
    <property type="entry name" value="Chemokine_XCR1"/>
</dbReference>
<dbReference type="InterPro" id="IPR000276">
    <property type="entry name" value="GPCR_Rhodpsn"/>
</dbReference>
<dbReference type="InterPro" id="IPR017452">
    <property type="entry name" value="GPCR_Rhodpsn_7TM"/>
</dbReference>
<dbReference type="PANTHER" id="PTHR10489">
    <property type="entry name" value="CELL ADHESION MOLECULE"/>
    <property type="match status" value="1"/>
</dbReference>
<dbReference type="PANTHER" id="PTHR10489:SF730">
    <property type="entry name" value="CHEMOKINE XC RECEPTOR 1"/>
    <property type="match status" value="1"/>
</dbReference>
<dbReference type="Pfam" id="PF00001">
    <property type="entry name" value="7tm_1"/>
    <property type="match status" value="1"/>
</dbReference>
<dbReference type="PRINTS" id="PR00237">
    <property type="entry name" value="GPCRRHODOPSN"/>
</dbReference>
<dbReference type="PRINTS" id="PR01568">
    <property type="entry name" value="LYMPHOTACTNR"/>
</dbReference>
<dbReference type="SUPFAM" id="SSF81321">
    <property type="entry name" value="Family A G protein-coupled receptor-like"/>
    <property type="match status" value="1"/>
</dbReference>
<dbReference type="PROSITE" id="PS00237">
    <property type="entry name" value="G_PROTEIN_RECEP_F1_1"/>
    <property type="match status" value="1"/>
</dbReference>
<dbReference type="PROSITE" id="PS50262">
    <property type="entry name" value="G_PROTEIN_RECEP_F1_2"/>
    <property type="match status" value="1"/>
</dbReference>
<keyword id="KW-1003">Cell membrane</keyword>
<keyword id="KW-1015">Disulfide bond</keyword>
<keyword id="KW-0297">G-protein coupled receptor</keyword>
<keyword id="KW-0472">Membrane</keyword>
<keyword id="KW-0675">Receptor</keyword>
<keyword id="KW-1185">Reference proteome</keyword>
<keyword id="KW-0807">Transducer</keyword>
<keyword id="KW-0812">Transmembrane</keyword>
<keyword id="KW-1133">Transmembrane helix</keyword>
<protein>
    <recommendedName>
        <fullName>Chemokine XC receptor 1</fullName>
    </recommendedName>
    <alternativeName>
        <fullName>Lymphotactin receptor</fullName>
    </alternativeName>
    <alternativeName>
        <fullName>SCM1 receptor</fullName>
    </alternativeName>
    <alternativeName>
        <fullName>XC chemokine receptor 1</fullName>
    </alternativeName>
    <alternativeName>
        <fullName>mXCR1</fullName>
    </alternativeName>
</protein>
<accession>Q9R0M1</accession>
<organism>
    <name type="scientific">Mus musculus</name>
    <name type="common">Mouse</name>
    <dbReference type="NCBI Taxonomy" id="10090"/>
    <lineage>
        <taxon>Eukaryota</taxon>
        <taxon>Metazoa</taxon>
        <taxon>Chordata</taxon>
        <taxon>Craniata</taxon>
        <taxon>Vertebrata</taxon>
        <taxon>Euteleostomi</taxon>
        <taxon>Mammalia</taxon>
        <taxon>Eutheria</taxon>
        <taxon>Euarchontoglires</taxon>
        <taxon>Glires</taxon>
        <taxon>Rodentia</taxon>
        <taxon>Myomorpha</taxon>
        <taxon>Muroidea</taxon>
        <taxon>Muridae</taxon>
        <taxon>Murinae</taxon>
        <taxon>Mus</taxon>
        <taxon>Mus</taxon>
    </lineage>
</organism>
<sequence length="322" mass="37308">MESSTAFYDYHDKLSLLCENNVIFFSTISTIVLYSLVFLLSLVGNSLVLWVLVKYENLESLTNIFILNLCLSDLMFSCLLPVLISAQWSWFLGDFFCKFFNMIFGISLYSSIFFLTIMTIHRYLSVVSPISTLGIHTLRCRVLVTSCVWAASILFSIPDAVFHKVISLNCKYSEHHGFLASVYQHNIFFLLSMGIILFCYVQILRTLFRTRSRQRHRTVRLIFTVVVAYFLSWAPYNLTLFLKTGIIQQSCESLQQLDIAMIICRHLAFSHCCFNPVLYVFVGIKFRRHLKHLFQQVWLCRKTSSTVPCSPGTFTYEGPSFY</sequence>
<reference key="1">
    <citation type="journal article" date="1999" name="FEBS Lett.">
        <title>Molecular cloning of mXCR1, the murine SCM-1/lymphotactin receptor.</title>
        <authorList>
            <person name="Yoshida T."/>
            <person name="Izawa D."/>
            <person name="Nakayama T."/>
            <person name="Nakahara K."/>
            <person name="Kakizaki M."/>
            <person name="Imai T."/>
            <person name="Suzuki R."/>
            <person name="Miyasaka M."/>
            <person name="Yoshie O."/>
        </authorList>
    </citation>
    <scope>NUCLEOTIDE SEQUENCE [GENOMIC DNA]</scope>
    <source>
        <strain>129/SvJ</strain>
    </source>
</reference>
<reference key="2">
    <citation type="journal article" date="2011" name="J. Exp. Med.">
        <title>Aire-dependent production of XCL1 mediates medullary accumulation of thymic dendritic cells and contributes to regulatory T cell development.</title>
        <authorList>
            <person name="Lei Y."/>
            <person name="Ripen A.M."/>
            <person name="Ishimaru N."/>
            <person name="Ohigashi I."/>
            <person name="Nagasawa T."/>
            <person name="Jeker L.T."/>
            <person name="Boesl M.R."/>
            <person name="Hollaender G.A."/>
            <person name="Hayashi Y."/>
            <person name="Malefyt R.W."/>
            <person name="Nitta T."/>
            <person name="Takahama Y."/>
        </authorList>
    </citation>
    <scope>TISSUE SPECIFICITY</scope>
</reference>
<gene>
    <name type="primary">Xcr1</name>
    <name type="synonym">Ccxcr1</name>
</gene>
<feature type="chain" id="PRO_0000070222" description="Chemokine XC receptor 1">
    <location>
        <begin position="1"/>
        <end position="322"/>
    </location>
</feature>
<feature type="topological domain" description="Extracellular" evidence="1">
    <location>
        <begin position="1"/>
        <end position="27"/>
    </location>
</feature>
<feature type="transmembrane region" description="Helical; Name=1" evidence="1">
    <location>
        <begin position="28"/>
        <end position="55"/>
    </location>
</feature>
<feature type="topological domain" description="Cytoplasmic" evidence="1">
    <location>
        <begin position="56"/>
        <end position="65"/>
    </location>
</feature>
<feature type="transmembrane region" description="Helical; Name=2" evidence="1">
    <location>
        <begin position="66"/>
        <end position="85"/>
    </location>
</feature>
<feature type="topological domain" description="Extracellular" evidence="1">
    <location>
        <begin position="86"/>
        <end position="98"/>
    </location>
</feature>
<feature type="transmembrane region" description="Helical; Name=3" evidence="1">
    <location>
        <begin position="99"/>
        <end position="120"/>
    </location>
</feature>
<feature type="topological domain" description="Cytoplasmic" evidence="1">
    <location>
        <begin position="121"/>
        <end position="137"/>
    </location>
</feature>
<feature type="transmembrane region" description="Helical; Name=4" evidence="1">
    <location>
        <begin position="138"/>
        <end position="162"/>
    </location>
</feature>
<feature type="topological domain" description="Extracellular" evidence="1">
    <location>
        <begin position="163"/>
        <end position="185"/>
    </location>
</feature>
<feature type="transmembrane region" description="Helical; Name=5" evidence="1">
    <location>
        <begin position="186"/>
        <end position="204"/>
    </location>
</feature>
<feature type="topological domain" description="Cytoplasmic" evidence="1">
    <location>
        <begin position="205"/>
        <end position="220"/>
    </location>
</feature>
<feature type="transmembrane region" description="Helical; Name=6" evidence="1">
    <location>
        <begin position="221"/>
        <end position="243"/>
    </location>
</feature>
<feature type="topological domain" description="Extracellular" evidence="1">
    <location>
        <begin position="244"/>
        <end position="259"/>
    </location>
</feature>
<feature type="transmembrane region" description="Helical; Name=7" evidence="1">
    <location>
        <begin position="260"/>
        <end position="283"/>
    </location>
</feature>
<feature type="topological domain" description="Cytoplasmic" evidence="1">
    <location>
        <begin position="284"/>
        <end position="322"/>
    </location>
</feature>
<feature type="disulfide bond" evidence="2">
    <location>
        <begin position="97"/>
        <end position="170"/>
    </location>
</feature>
<comment type="function">
    <text evidence="4">Receptor for chemokines SCYC1 and SCYC2. Subsequently transduces a signal by increasing the intracellular calcium ions level. Receptor for XCL1/Lymphotactin (Probable).</text>
</comment>
<comment type="subcellular location">
    <subcellularLocation>
        <location>Cell membrane</location>
        <topology>Multi-pass membrane protein</topology>
    </subcellularLocation>
</comment>
<comment type="tissue specificity">
    <text evidence="3">Expressed by dendritic cells from the thymus, slpeen, subcutaneous lymph nodes and mesenteric lymph nodes.</text>
</comment>
<comment type="similarity">
    <text evidence="2">Belongs to the G-protein coupled receptor 1 family.</text>
</comment>